<accession>B7LWJ2</accession>
<evidence type="ECO:0000255" key="1">
    <source>
        <dbReference type="HAMAP-Rule" id="MF_00090"/>
    </source>
</evidence>
<name>PIMT_ESCF3</name>
<feature type="chain" id="PRO_1000117208" description="Protein-L-isoaspartate O-methyltransferase">
    <location>
        <begin position="1"/>
        <end position="208"/>
    </location>
</feature>
<feature type="active site" evidence="1">
    <location>
        <position position="59"/>
    </location>
</feature>
<gene>
    <name evidence="1" type="primary">pcm</name>
    <name type="ordered locus">EFER_0325</name>
</gene>
<organism>
    <name type="scientific">Escherichia fergusonii (strain ATCC 35469 / DSM 13698 / CCUG 18766 / IAM 14443 / JCM 21226 / LMG 7866 / NBRC 102419 / NCTC 12128 / CDC 0568-73)</name>
    <dbReference type="NCBI Taxonomy" id="585054"/>
    <lineage>
        <taxon>Bacteria</taxon>
        <taxon>Pseudomonadati</taxon>
        <taxon>Pseudomonadota</taxon>
        <taxon>Gammaproteobacteria</taxon>
        <taxon>Enterobacterales</taxon>
        <taxon>Enterobacteriaceae</taxon>
        <taxon>Escherichia</taxon>
    </lineage>
</organism>
<dbReference type="EC" id="2.1.1.77" evidence="1"/>
<dbReference type="EMBL" id="CU928158">
    <property type="protein sequence ID" value="CAQ87888.1"/>
    <property type="molecule type" value="Genomic_DNA"/>
</dbReference>
<dbReference type="RefSeq" id="WP_000254699.1">
    <property type="nucleotide sequence ID" value="NC_011740.1"/>
</dbReference>
<dbReference type="SMR" id="B7LWJ2"/>
<dbReference type="GeneID" id="75058603"/>
<dbReference type="KEGG" id="efe:EFER_0325"/>
<dbReference type="HOGENOM" id="CLU_055432_2_0_6"/>
<dbReference type="OrthoDB" id="9810066at2"/>
<dbReference type="Proteomes" id="UP000000745">
    <property type="component" value="Chromosome"/>
</dbReference>
<dbReference type="GO" id="GO:0005737">
    <property type="term" value="C:cytoplasm"/>
    <property type="evidence" value="ECO:0007669"/>
    <property type="project" value="UniProtKB-SubCell"/>
</dbReference>
<dbReference type="GO" id="GO:0004719">
    <property type="term" value="F:protein-L-isoaspartate (D-aspartate) O-methyltransferase activity"/>
    <property type="evidence" value="ECO:0007669"/>
    <property type="project" value="UniProtKB-UniRule"/>
</dbReference>
<dbReference type="GO" id="GO:0032259">
    <property type="term" value="P:methylation"/>
    <property type="evidence" value="ECO:0007669"/>
    <property type="project" value="UniProtKB-KW"/>
</dbReference>
<dbReference type="GO" id="GO:0036211">
    <property type="term" value="P:protein modification process"/>
    <property type="evidence" value="ECO:0007669"/>
    <property type="project" value="UniProtKB-UniRule"/>
</dbReference>
<dbReference type="GO" id="GO:0030091">
    <property type="term" value="P:protein repair"/>
    <property type="evidence" value="ECO:0007669"/>
    <property type="project" value="UniProtKB-UniRule"/>
</dbReference>
<dbReference type="CDD" id="cd02440">
    <property type="entry name" value="AdoMet_MTases"/>
    <property type="match status" value="1"/>
</dbReference>
<dbReference type="FunFam" id="3.40.50.150:FF:000010">
    <property type="entry name" value="Protein-L-isoaspartate O-methyltransferase"/>
    <property type="match status" value="1"/>
</dbReference>
<dbReference type="Gene3D" id="3.40.50.150">
    <property type="entry name" value="Vaccinia Virus protein VP39"/>
    <property type="match status" value="1"/>
</dbReference>
<dbReference type="HAMAP" id="MF_00090">
    <property type="entry name" value="PIMT"/>
    <property type="match status" value="1"/>
</dbReference>
<dbReference type="InterPro" id="IPR000682">
    <property type="entry name" value="PCMT"/>
</dbReference>
<dbReference type="InterPro" id="IPR029063">
    <property type="entry name" value="SAM-dependent_MTases_sf"/>
</dbReference>
<dbReference type="NCBIfam" id="TIGR00080">
    <property type="entry name" value="pimt"/>
    <property type="match status" value="1"/>
</dbReference>
<dbReference type="NCBIfam" id="NF001453">
    <property type="entry name" value="PRK00312.1"/>
    <property type="match status" value="1"/>
</dbReference>
<dbReference type="PANTHER" id="PTHR11579">
    <property type="entry name" value="PROTEIN-L-ISOASPARTATE O-METHYLTRANSFERASE"/>
    <property type="match status" value="1"/>
</dbReference>
<dbReference type="PANTHER" id="PTHR11579:SF0">
    <property type="entry name" value="PROTEIN-L-ISOASPARTATE(D-ASPARTATE) O-METHYLTRANSFERASE"/>
    <property type="match status" value="1"/>
</dbReference>
<dbReference type="Pfam" id="PF01135">
    <property type="entry name" value="PCMT"/>
    <property type="match status" value="1"/>
</dbReference>
<dbReference type="SUPFAM" id="SSF53335">
    <property type="entry name" value="S-adenosyl-L-methionine-dependent methyltransferases"/>
    <property type="match status" value="1"/>
</dbReference>
<dbReference type="PROSITE" id="PS01279">
    <property type="entry name" value="PCMT"/>
    <property type="match status" value="1"/>
</dbReference>
<comment type="function">
    <text evidence="1">Catalyzes the methyl esterification of L-isoaspartyl residues in peptides and proteins that result from spontaneous decomposition of normal L-aspartyl and L-asparaginyl residues. It plays a role in the repair and/or degradation of damaged proteins.</text>
</comment>
<comment type="catalytic activity">
    <reaction evidence="1">
        <text>[protein]-L-isoaspartate + S-adenosyl-L-methionine = [protein]-L-isoaspartate alpha-methyl ester + S-adenosyl-L-homocysteine</text>
        <dbReference type="Rhea" id="RHEA:12705"/>
        <dbReference type="Rhea" id="RHEA-COMP:12143"/>
        <dbReference type="Rhea" id="RHEA-COMP:12144"/>
        <dbReference type="ChEBI" id="CHEBI:57856"/>
        <dbReference type="ChEBI" id="CHEBI:59789"/>
        <dbReference type="ChEBI" id="CHEBI:90596"/>
        <dbReference type="ChEBI" id="CHEBI:90598"/>
        <dbReference type="EC" id="2.1.1.77"/>
    </reaction>
</comment>
<comment type="subcellular location">
    <subcellularLocation>
        <location evidence="1">Cytoplasm</location>
    </subcellularLocation>
</comment>
<comment type="similarity">
    <text evidence="1">Belongs to the methyltransferase superfamily. L-isoaspartyl/D-aspartyl protein methyltransferase family.</text>
</comment>
<reference key="1">
    <citation type="journal article" date="2009" name="PLoS Genet.">
        <title>Organised genome dynamics in the Escherichia coli species results in highly diverse adaptive paths.</title>
        <authorList>
            <person name="Touchon M."/>
            <person name="Hoede C."/>
            <person name="Tenaillon O."/>
            <person name="Barbe V."/>
            <person name="Baeriswyl S."/>
            <person name="Bidet P."/>
            <person name="Bingen E."/>
            <person name="Bonacorsi S."/>
            <person name="Bouchier C."/>
            <person name="Bouvet O."/>
            <person name="Calteau A."/>
            <person name="Chiapello H."/>
            <person name="Clermont O."/>
            <person name="Cruveiller S."/>
            <person name="Danchin A."/>
            <person name="Diard M."/>
            <person name="Dossat C."/>
            <person name="Karoui M.E."/>
            <person name="Frapy E."/>
            <person name="Garry L."/>
            <person name="Ghigo J.M."/>
            <person name="Gilles A.M."/>
            <person name="Johnson J."/>
            <person name="Le Bouguenec C."/>
            <person name="Lescat M."/>
            <person name="Mangenot S."/>
            <person name="Martinez-Jehanne V."/>
            <person name="Matic I."/>
            <person name="Nassif X."/>
            <person name="Oztas S."/>
            <person name="Petit M.A."/>
            <person name="Pichon C."/>
            <person name="Rouy Z."/>
            <person name="Ruf C.S."/>
            <person name="Schneider D."/>
            <person name="Tourret J."/>
            <person name="Vacherie B."/>
            <person name="Vallenet D."/>
            <person name="Medigue C."/>
            <person name="Rocha E.P.C."/>
            <person name="Denamur E."/>
        </authorList>
    </citation>
    <scope>NUCLEOTIDE SEQUENCE [LARGE SCALE GENOMIC DNA]</scope>
    <source>
        <strain>ATCC 35469 / DSM 13698 / BCRC 15582 / CCUG 18766 / IAM 14443 / JCM 21226 / LMG 7866 / NBRC 102419 / NCTC 12128 / CDC 0568-73</strain>
    </source>
</reference>
<sequence length="208" mass="23272">MVSRRVQALLDQLRAQGIKDEQVLNALAAVPREKFIDEAFEQKAWDNIALPIGQGQTISQPYMVARMTELLELTPQSRVLEIGTGSGYQTAILAHLVQHVCSVERIKGLQWQARRRLKNLDLHNVSTRHGDGWQGWQARAPFDAIIVTAAPPEIPTALMTQLDEGGILVLPVGEEHQYLKRVRRRGGEFIIDTVEAVRFVPLVKGELA</sequence>
<proteinExistence type="inferred from homology"/>
<keyword id="KW-0963">Cytoplasm</keyword>
<keyword id="KW-0489">Methyltransferase</keyword>
<keyword id="KW-0949">S-adenosyl-L-methionine</keyword>
<keyword id="KW-0808">Transferase</keyword>
<protein>
    <recommendedName>
        <fullName evidence="1">Protein-L-isoaspartate O-methyltransferase</fullName>
        <ecNumber evidence="1">2.1.1.77</ecNumber>
    </recommendedName>
    <alternativeName>
        <fullName evidence="1">L-isoaspartyl protein carboxyl methyltransferase</fullName>
    </alternativeName>
    <alternativeName>
        <fullName evidence="1">Protein L-isoaspartyl methyltransferase</fullName>
    </alternativeName>
    <alternativeName>
        <fullName evidence="1">Protein-beta-aspartate methyltransferase</fullName>
        <shortName evidence="1">PIMT</shortName>
    </alternativeName>
</protein>